<comment type="similarity">
    <text evidence="1">Belongs to the bacterial ribosomal protein bL33 family.</text>
</comment>
<reference key="1">
    <citation type="journal article" date="2007" name="Genome Res.">
        <title>Genome characteristics of facultatively symbiotic Frankia sp. strains reflect host range and host plant biogeography.</title>
        <authorList>
            <person name="Normand P."/>
            <person name="Lapierre P."/>
            <person name="Tisa L.S."/>
            <person name="Gogarten J.P."/>
            <person name="Alloisio N."/>
            <person name="Bagnarol E."/>
            <person name="Bassi C.A."/>
            <person name="Berry A.M."/>
            <person name="Bickhart D.M."/>
            <person name="Choisne N."/>
            <person name="Couloux A."/>
            <person name="Cournoyer B."/>
            <person name="Cruveiller S."/>
            <person name="Daubin V."/>
            <person name="Demange N."/>
            <person name="Francino M.P."/>
            <person name="Goltsman E."/>
            <person name="Huang Y."/>
            <person name="Kopp O.R."/>
            <person name="Labarre L."/>
            <person name="Lapidus A."/>
            <person name="Lavire C."/>
            <person name="Marechal J."/>
            <person name="Martinez M."/>
            <person name="Mastronunzio J.E."/>
            <person name="Mullin B.C."/>
            <person name="Niemann J."/>
            <person name="Pujic P."/>
            <person name="Rawnsley T."/>
            <person name="Rouy Z."/>
            <person name="Schenowitz C."/>
            <person name="Sellstedt A."/>
            <person name="Tavares F."/>
            <person name="Tomkins J.P."/>
            <person name="Vallenet D."/>
            <person name="Valverde C."/>
            <person name="Wall L.G."/>
            <person name="Wang Y."/>
            <person name="Medigue C."/>
            <person name="Benson D.R."/>
        </authorList>
    </citation>
    <scope>NUCLEOTIDE SEQUENCE [LARGE SCALE GENOMIC DNA]</scope>
    <source>
        <strain>DSM 45986 / CECT 9034 / ACN14a</strain>
    </source>
</reference>
<evidence type="ECO:0000255" key="1">
    <source>
        <dbReference type="HAMAP-Rule" id="MF_00294"/>
    </source>
</evidence>
<evidence type="ECO:0000305" key="2"/>
<dbReference type="EMBL" id="CT573213">
    <property type="protein sequence ID" value="CAJ59724.1"/>
    <property type="molecule type" value="Genomic_DNA"/>
</dbReference>
<dbReference type="SMR" id="Q0RRU1"/>
<dbReference type="STRING" id="326424.FRAAL1059"/>
<dbReference type="KEGG" id="fal:FRAAL1059"/>
<dbReference type="eggNOG" id="COG0267">
    <property type="taxonomic scope" value="Bacteria"/>
</dbReference>
<dbReference type="HOGENOM" id="CLU_190949_0_2_11"/>
<dbReference type="OrthoDB" id="21586at2"/>
<dbReference type="Proteomes" id="UP000000657">
    <property type="component" value="Chromosome"/>
</dbReference>
<dbReference type="GO" id="GO:0005737">
    <property type="term" value="C:cytoplasm"/>
    <property type="evidence" value="ECO:0007669"/>
    <property type="project" value="UniProtKB-ARBA"/>
</dbReference>
<dbReference type="GO" id="GO:1990904">
    <property type="term" value="C:ribonucleoprotein complex"/>
    <property type="evidence" value="ECO:0007669"/>
    <property type="project" value="UniProtKB-KW"/>
</dbReference>
<dbReference type="GO" id="GO:0005840">
    <property type="term" value="C:ribosome"/>
    <property type="evidence" value="ECO:0007669"/>
    <property type="project" value="UniProtKB-KW"/>
</dbReference>
<dbReference type="GO" id="GO:0003735">
    <property type="term" value="F:structural constituent of ribosome"/>
    <property type="evidence" value="ECO:0007669"/>
    <property type="project" value="InterPro"/>
</dbReference>
<dbReference type="GO" id="GO:0006412">
    <property type="term" value="P:translation"/>
    <property type="evidence" value="ECO:0007669"/>
    <property type="project" value="UniProtKB-UniRule"/>
</dbReference>
<dbReference type="Gene3D" id="2.20.28.120">
    <property type="entry name" value="Ribosomal protein L33"/>
    <property type="match status" value="1"/>
</dbReference>
<dbReference type="HAMAP" id="MF_00294">
    <property type="entry name" value="Ribosomal_bL33"/>
    <property type="match status" value="1"/>
</dbReference>
<dbReference type="InterPro" id="IPR001705">
    <property type="entry name" value="Ribosomal_bL33"/>
</dbReference>
<dbReference type="InterPro" id="IPR018264">
    <property type="entry name" value="Ribosomal_bL33_CS"/>
</dbReference>
<dbReference type="InterPro" id="IPR038584">
    <property type="entry name" value="Ribosomal_bL33_sf"/>
</dbReference>
<dbReference type="InterPro" id="IPR011332">
    <property type="entry name" value="Ribosomal_zn-bd"/>
</dbReference>
<dbReference type="NCBIfam" id="NF001764">
    <property type="entry name" value="PRK00504.1"/>
    <property type="match status" value="1"/>
</dbReference>
<dbReference type="NCBIfam" id="NF001860">
    <property type="entry name" value="PRK00595.1"/>
    <property type="match status" value="1"/>
</dbReference>
<dbReference type="NCBIfam" id="TIGR01023">
    <property type="entry name" value="rpmG_bact"/>
    <property type="match status" value="1"/>
</dbReference>
<dbReference type="PANTHER" id="PTHR43168">
    <property type="entry name" value="50S RIBOSOMAL PROTEIN L33, CHLOROPLASTIC"/>
    <property type="match status" value="1"/>
</dbReference>
<dbReference type="PANTHER" id="PTHR43168:SF2">
    <property type="entry name" value="LARGE RIBOSOMAL SUBUNIT PROTEIN BL33C"/>
    <property type="match status" value="1"/>
</dbReference>
<dbReference type="Pfam" id="PF00471">
    <property type="entry name" value="Ribosomal_L33"/>
    <property type="match status" value="1"/>
</dbReference>
<dbReference type="SUPFAM" id="SSF57829">
    <property type="entry name" value="Zn-binding ribosomal proteins"/>
    <property type="match status" value="1"/>
</dbReference>
<dbReference type="PROSITE" id="PS00582">
    <property type="entry name" value="RIBOSOMAL_L33"/>
    <property type="match status" value="1"/>
</dbReference>
<proteinExistence type="inferred from homology"/>
<keyword id="KW-1185">Reference proteome</keyword>
<keyword id="KW-0687">Ribonucleoprotein</keyword>
<keyword id="KW-0689">Ribosomal protein</keyword>
<feature type="chain" id="PRO_1000004168" description="Large ribosomal subunit protein bL33">
    <location>
        <begin position="1"/>
        <end position="54"/>
    </location>
</feature>
<organism>
    <name type="scientific">Frankia alni (strain DSM 45986 / CECT 9034 / ACN14a)</name>
    <dbReference type="NCBI Taxonomy" id="326424"/>
    <lineage>
        <taxon>Bacteria</taxon>
        <taxon>Bacillati</taxon>
        <taxon>Actinomycetota</taxon>
        <taxon>Actinomycetes</taxon>
        <taxon>Frankiales</taxon>
        <taxon>Frankiaceae</taxon>
        <taxon>Frankia</taxon>
    </lineage>
</organism>
<sequence length="54" mass="6469">MAATDVRPKITMACQVCKHRNYITRKNRRNDPDRLELKKFCPNCGKHTEHRETR</sequence>
<gene>
    <name evidence="1" type="primary">rpmG</name>
    <name type="ordered locus">FRAAL1059</name>
</gene>
<accession>Q0RRU1</accession>
<name>RL33_FRAAA</name>
<protein>
    <recommendedName>
        <fullName evidence="1">Large ribosomal subunit protein bL33</fullName>
    </recommendedName>
    <alternativeName>
        <fullName evidence="2">50S ribosomal protein L33</fullName>
    </alternativeName>
</protein>